<gene>
    <name evidence="1" type="primary">clpS</name>
    <name type="ordered locus">ETA_21620</name>
</gene>
<protein>
    <recommendedName>
        <fullName evidence="1">ATP-dependent Clp protease adapter protein ClpS</fullName>
    </recommendedName>
</protein>
<reference key="1">
    <citation type="journal article" date="2008" name="Environ. Microbiol.">
        <title>The genome of Erwinia tasmaniensis strain Et1/99, a non-pathogenic bacterium in the genus Erwinia.</title>
        <authorList>
            <person name="Kube M."/>
            <person name="Migdoll A.M."/>
            <person name="Mueller I."/>
            <person name="Kuhl H."/>
            <person name="Beck A."/>
            <person name="Reinhardt R."/>
            <person name="Geider K."/>
        </authorList>
    </citation>
    <scope>NUCLEOTIDE SEQUENCE [LARGE SCALE GENOMIC DNA]</scope>
    <source>
        <strain>DSM 17950 / CFBP 7177 / CIP 109463 / NCPPB 4357 / Et1/99</strain>
    </source>
</reference>
<accession>B2VC66</accession>
<comment type="function">
    <text evidence="1">Involved in the modulation of the specificity of the ClpAP-mediated ATP-dependent protein degradation.</text>
</comment>
<comment type="subunit">
    <text evidence="1">Binds to the N-terminal domain of the chaperone ClpA.</text>
</comment>
<comment type="similarity">
    <text evidence="1">Belongs to the ClpS family.</text>
</comment>
<keyword id="KW-1185">Reference proteome</keyword>
<feature type="chain" id="PRO_1000115458" description="ATP-dependent Clp protease adapter protein ClpS">
    <location>
        <begin position="1"/>
        <end position="106"/>
    </location>
</feature>
<proteinExistence type="inferred from homology"/>
<name>CLPS_ERWT9</name>
<evidence type="ECO:0000255" key="1">
    <source>
        <dbReference type="HAMAP-Rule" id="MF_00302"/>
    </source>
</evidence>
<sequence>MGKTNDWLNFEQLADDKVREELKPPSMYKVILNNDDFTPMEFVIDVLQKFFSYDIERATQLMLTVHYQGKAICGVFTAEVAETKVAHVNKYARDNEHPLLCTLEKA</sequence>
<organism>
    <name type="scientific">Erwinia tasmaniensis (strain DSM 17950 / CFBP 7177 / CIP 109463 / NCPPB 4357 / Et1/99)</name>
    <dbReference type="NCBI Taxonomy" id="465817"/>
    <lineage>
        <taxon>Bacteria</taxon>
        <taxon>Pseudomonadati</taxon>
        <taxon>Pseudomonadota</taxon>
        <taxon>Gammaproteobacteria</taxon>
        <taxon>Enterobacterales</taxon>
        <taxon>Erwiniaceae</taxon>
        <taxon>Erwinia</taxon>
    </lineage>
</organism>
<dbReference type="EMBL" id="CU468135">
    <property type="protein sequence ID" value="CAO97208.1"/>
    <property type="molecule type" value="Genomic_DNA"/>
</dbReference>
<dbReference type="RefSeq" id="WP_012441877.1">
    <property type="nucleotide sequence ID" value="NC_010694.1"/>
</dbReference>
<dbReference type="SMR" id="B2VC66"/>
<dbReference type="STRING" id="465817.ETA_21620"/>
<dbReference type="KEGG" id="eta:ETA_21620"/>
<dbReference type="eggNOG" id="COG2127">
    <property type="taxonomic scope" value="Bacteria"/>
</dbReference>
<dbReference type="HOGENOM" id="CLU_134358_2_1_6"/>
<dbReference type="OrthoDB" id="9796121at2"/>
<dbReference type="Proteomes" id="UP000001726">
    <property type="component" value="Chromosome"/>
</dbReference>
<dbReference type="GO" id="GO:0030163">
    <property type="term" value="P:protein catabolic process"/>
    <property type="evidence" value="ECO:0007669"/>
    <property type="project" value="InterPro"/>
</dbReference>
<dbReference type="GO" id="GO:0006508">
    <property type="term" value="P:proteolysis"/>
    <property type="evidence" value="ECO:0007669"/>
    <property type="project" value="UniProtKB-UniRule"/>
</dbReference>
<dbReference type="FunFam" id="3.30.1390.10:FF:000002">
    <property type="entry name" value="ATP-dependent Clp protease adapter protein ClpS"/>
    <property type="match status" value="1"/>
</dbReference>
<dbReference type="Gene3D" id="3.30.1390.10">
    <property type="match status" value="1"/>
</dbReference>
<dbReference type="HAMAP" id="MF_00302">
    <property type="entry name" value="ClpS"/>
    <property type="match status" value="1"/>
</dbReference>
<dbReference type="InterPro" id="IPR022935">
    <property type="entry name" value="ClpS"/>
</dbReference>
<dbReference type="InterPro" id="IPR003769">
    <property type="entry name" value="ClpS_core"/>
</dbReference>
<dbReference type="InterPro" id="IPR014719">
    <property type="entry name" value="Ribosomal_bL12_C/ClpS-like"/>
</dbReference>
<dbReference type="NCBIfam" id="NF000670">
    <property type="entry name" value="PRK00033.1-3"/>
    <property type="match status" value="1"/>
</dbReference>
<dbReference type="NCBIfam" id="NF000672">
    <property type="entry name" value="PRK00033.1-5"/>
    <property type="match status" value="1"/>
</dbReference>
<dbReference type="PANTHER" id="PTHR33473:SF19">
    <property type="entry name" value="ATP-DEPENDENT CLP PROTEASE ADAPTER PROTEIN CLPS"/>
    <property type="match status" value="1"/>
</dbReference>
<dbReference type="PANTHER" id="PTHR33473">
    <property type="entry name" value="ATP-DEPENDENT CLP PROTEASE ADAPTER PROTEIN CLPS1, CHLOROPLASTIC"/>
    <property type="match status" value="1"/>
</dbReference>
<dbReference type="Pfam" id="PF02617">
    <property type="entry name" value="ClpS"/>
    <property type="match status" value="1"/>
</dbReference>
<dbReference type="SUPFAM" id="SSF54736">
    <property type="entry name" value="ClpS-like"/>
    <property type="match status" value="1"/>
</dbReference>